<feature type="chain" id="PRO_0000223123" description="UPF0328 protein ECU05_0030">
    <location>
        <begin position="1"/>
        <end position="457"/>
    </location>
</feature>
<feature type="region of interest" description="Disordered" evidence="1">
    <location>
        <begin position="1"/>
        <end position="112"/>
    </location>
</feature>
<feature type="region of interest" description="Disordered" evidence="1">
    <location>
        <begin position="157"/>
        <end position="183"/>
    </location>
</feature>
<feature type="compositionally biased region" description="Basic and acidic residues" evidence="1">
    <location>
        <begin position="74"/>
        <end position="94"/>
    </location>
</feature>
<feature type="compositionally biased region" description="Pro residues" evidence="1">
    <location>
        <begin position="102"/>
        <end position="112"/>
    </location>
</feature>
<protein>
    <recommendedName>
        <fullName>UPF0328 protein ECU05_0030</fullName>
    </recommendedName>
</protein>
<gene>
    <name type="ordered locus">ECU05_0030</name>
</gene>
<evidence type="ECO:0000256" key="1">
    <source>
        <dbReference type="SAM" id="MobiDB-lite"/>
    </source>
</evidence>
<evidence type="ECO:0000305" key="2"/>
<comment type="similarity">
    <text evidence="2">Belongs to the UPF0328 family.</text>
</comment>
<accession>P0CS96</accession>
<accession>Q8ST70</accession>
<keyword id="KW-1185">Reference proteome</keyword>
<name>Y503_ENCCU</name>
<proteinExistence type="inferred from homology"/>
<organism>
    <name type="scientific">Encephalitozoon cuniculi (strain GB-M1)</name>
    <name type="common">Microsporidian parasite</name>
    <dbReference type="NCBI Taxonomy" id="284813"/>
    <lineage>
        <taxon>Eukaryota</taxon>
        <taxon>Fungi</taxon>
        <taxon>Fungi incertae sedis</taxon>
        <taxon>Microsporidia</taxon>
        <taxon>Unikaryonidae</taxon>
        <taxon>Encephalitozoon</taxon>
    </lineage>
</organism>
<sequence length="457" mass="51186">MPRPASHLAPMPSDHPDFRSKSARLRCQPPRTNNCGTFKQPPSVAATSRPKPGNPFLQPPTKGTPPPKKKKKNHTEGCHTHEANPEPNTKHTETEPPIISHCPPPHPGPTATPNLLPCPNPTSSFCQNTRDSPSLPPNVQTWSIFPKHPSKDVTAQVKSQSVSHRAPITYQPPRPTTTSNPRISQSYHMKSISSYLSFAHMNITHTTEQHAENQPHWKTILDIAPFVSITFPAIMCLIFDEDSFEESPFLRFITLLLPFSYSAVQYALLYTNWKSHNKPEPILHTTLYYTLSLLLLAFTIISILSIIPFSLNEWDHAASFFYPIVLPSFTVPPAYLLSSSYFLVPRQIRLTDTVISILISVCSIVNVLLVFKEFNYYPYSAIISSISVLLQLLSEKHCLFKQSPPSTASSRAAVLILTLILAVLVYTFLGYGAIYILDDHFHLLGKMKSILPSEPHQ</sequence>
<dbReference type="EMBL" id="AL590445">
    <property type="protein sequence ID" value="CAD26520.2"/>
    <property type="molecule type" value="Genomic_DNA"/>
</dbReference>
<dbReference type="RefSeq" id="NP_597343.2">
    <property type="nucleotide sequence ID" value="NM_001041209.2"/>
</dbReference>
<dbReference type="GeneID" id="859007"/>
<dbReference type="KEGG" id="ecu:ECU05_0030"/>
<dbReference type="VEuPathDB" id="MicrosporidiaDB:ECU05_0030"/>
<dbReference type="HOGENOM" id="CLU_612531_0_0_1"/>
<dbReference type="InParanoid" id="P0CS96"/>
<dbReference type="OrthoDB" id="13013at6029"/>
<dbReference type="Proteomes" id="UP000000819">
    <property type="component" value="Chromosome V"/>
</dbReference>
<dbReference type="InterPro" id="IPR019081">
    <property type="entry name" value="UPF0328"/>
</dbReference>
<dbReference type="Pfam" id="PF09591">
    <property type="entry name" value="DUF2463"/>
    <property type="match status" value="1"/>
</dbReference>
<reference key="1">
    <citation type="journal article" date="2001" name="Nature">
        <title>Genome sequence and gene compaction of the eukaryote parasite Encephalitozoon cuniculi.</title>
        <authorList>
            <person name="Katinka M.D."/>
            <person name="Duprat S."/>
            <person name="Cornillot E."/>
            <person name="Metenier G."/>
            <person name="Thomarat F."/>
            <person name="Prensier G."/>
            <person name="Barbe V."/>
            <person name="Peyretaillade E."/>
            <person name="Brottier P."/>
            <person name="Wincker P."/>
            <person name="Delbac F."/>
            <person name="El Alaoui H."/>
            <person name="Peyret P."/>
            <person name="Saurin W."/>
            <person name="Gouy M."/>
            <person name="Weissenbach J."/>
            <person name="Vivares C.P."/>
        </authorList>
    </citation>
    <scope>NUCLEOTIDE SEQUENCE [LARGE SCALE GENOMIC DNA]</scope>
    <source>
        <strain>GB-M1</strain>
    </source>
</reference>
<reference key="2">
    <citation type="journal article" date="2009" name="BMC Genomics">
        <title>Identification of transcriptional signals in Encephalitozoon cuniculi widespread among Microsporidia phylum: support for accurate structural genome annotation.</title>
        <authorList>
            <person name="Peyretaillade E."/>
            <person name="Goncalves O."/>
            <person name="Terrat S."/>
            <person name="Dugat-Bony E."/>
            <person name="Wincker P."/>
            <person name="Cornman R.S."/>
            <person name="Evans J.D."/>
            <person name="Delbac F."/>
            <person name="Peyret P."/>
        </authorList>
    </citation>
    <scope>GENOME REANNOTATION</scope>
    <source>
        <strain>GB-M1</strain>
    </source>
</reference>